<sequence>MAAFLSAGLGILAPSETYPLPTTSSGWEPRLGSPFPSGPCTSSTGAQAVAEPTGQGPKNPRVSRVTVQLEMKPLWEEFNQLGTEMIVTKAGRRMFPPFQVKILGMDSLADYALLMDFIPLDDKRYRYAFHSSAWLVAGKADPATPGRVHFHPDSPAKGAQWMRQIVSFDKLKLTNNLLDDNGHIILNSMHRYQPRFHVVFVDPRKDSERYAQENFKSFIFTETQFTAVTAYQNHRITQLKIASNPFAKGFRESDLDSWPVAPRPLLSVPARSHSSLSPCVLKGATDREKDPNKASASTSKTPAWLHHQLLPPPEVLLAPATYRPVTYQSLYSGAPSHLGIPRTRPAPYPLPNIRADRDQGGLPLPAGLGLLSPTVVCLGPGQDSQ</sequence>
<protein>
    <recommendedName>
        <fullName>T-box transcription factor TBX10</fullName>
        <shortName>T-box protein 10</shortName>
    </recommendedName>
</protein>
<evidence type="ECO:0000255" key="1">
    <source>
        <dbReference type="PROSITE-ProRule" id="PRU00201"/>
    </source>
</evidence>
<evidence type="ECO:0000256" key="2">
    <source>
        <dbReference type="SAM" id="MobiDB-lite"/>
    </source>
</evidence>
<evidence type="ECO:0000305" key="3"/>
<dbReference type="EMBL" id="AY229977">
    <property type="protein sequence ID" value="AAO73483.1"/>
    <property type="molecule type" value="mRNA"/>
</dbReference>
<dbReference type="EMBL" id="BC113485">
    <property type="protein sequence ID" value="AAI13486.1"/>
    <property type="molecule type" value="mRNA"/>
</dbReference>
<dbReference type="EMBL" id="BC113487">
    <property type="protein sequence ID" value="AAI13488.1"/>
    <property type="molecule type" value="mRNA"/>
</dbReference>
<dbReference type="EMBL" id="AH006177">
    <property type="protein sequence ID" value="AAC23481.1"/>
    <property type="status" value="ALT_SEQ"/>
    <property type="molecule type" value="Genomic_DNA"/>
</dbReference>
<dbReference type="CCDS" id="CCDS31621.1"/>
<dbReference type="RefSeq" id="NP_005986.2">
    <property type="nucleotide sequence ID" value="NM_005995.4"/>
</dbReference>
<dbReference type="SMR" id="O75333"/>
<dbReference type="BioGRID" id="131494">
    <property type="interactions" value="1"/>
</dbReference>
<dbReference type="FunCoup" id="O75333">
    <property type="interactions" value="89"/>
</dbReference>
<dbReference type="STRING" id="9606.ENSP00000335191"/>
<dbReference type="GlyGen" id="O75333">
    <property type="glycosylation" value="1 site"/>
</dbReference>
<dbReference type="iPTMnet" id="O75333"/>
<dbReference type="PhosphoSitePlus" id="O75333"/>
<dbReference type="BioMuta" id="TBX10"/>
<dbReference type="MassIVE" id="O75333"/>
<dbReference type="PaxDb" id="9606-ENSP00000335191"/>
<dbReference type="PeptideAtlas" id="O75333"/>
<dbReference type="ProteomicsDB" id="49901"/>
<dbReference type="Antibodypedia" id="16597">
    <property type="antibodies" value="152 antibodies from 23 providers"/>
</dbReference>
<dbReference type="DNASU" id="347853"/>
<dbReference type="Ensembl" id="ENST00000335385.4">
    <property type="protein sequence ID" value="ENSP00000335191.3"/>
    <property type="gene ID" value="ENSG00000167800.10"/>
</dbReference>
<dbReference type="GeneID" id="347853"/>
<dbReference type="KEGG" id="hsa:347853"/>
<dbReference type="MANE-Select" id="ENST00000335385.4">
    <property type="protein sequence ID" value="ENSP00000335191.3"/>
    <property type="RefSeq nucleotide sequence ID" value="NM_005995.5"/>
    <property type="RefSeq protein sequence ID" value="NP_005986.2"/>
</dbReference>
<dbReference type="UCSC" id="uc001omp.3">
    <property type="organism name" value="human"/>
</dbReference>
<dbReference type="AGR" id="HGNC:11593"/>
<dbReference type="CTD" id="347853"/>
<dbReference type="DisGeNET" id="347853"/>
<dbReference type="GeneCards" id="TBX10"/>
<dbReference type="HGNC" id="HGNC:11593">
    <property type="gene designation" value="TBX10"/>
</dbReference>
<dbReference type="HPA" id="ENSG00000167800">
    <property type="expression patterns" value="Tissue enriched (intestine)"/>
</dbReference>
<dbReference type="MIM" id="604648">
    <property type="type" value="gene"/>
</dbReference>
<dbReference type="neXtProt" id="NX_O75333"/>
<dbReference type="OpenTargets" id="ENSG00000167800"/>
<dbReference type="PharmGKB" id="PA36356"/>
<dbReference type="VEuPathDB" id="HostDB:ENSG00000167800"/>
<dbReference type="eggNOG" id="KOG3586">
    <property type="taxonomic scope" value="Eukaryota"/>
</dbReference>
<dbReference type="GeneTree" id="ENSGT00940000154816"/>
<dbReference type="HOGENOM" id="CLU_014430_0_0_1"/>
<dbReference type="InParanoid" id="O75333"/>
<dbReference type="OMA" id="SSWEPQP"/>
<dbReference type="OrthoDB" id="7442607at2759"/>
<dbReference type="PAN-GO" id="O75333">
    <property type="GO annotations" value="4 GO annotations based on evolutionary models"/>
</dbReference>
<dbReference type="PhylomeDB" id="O75333"/>
<dbReference type="TreeFam" id="TF106341"/>
<dbReference type="PathwayCommons" id="O75333"/>
<dbReference type="BioGRID-ORCS" id="347853">
    <property type="hits" value="20 hits in 1164 CRISPR screens"/>
</dbReference>
<dbReference type="GenomeRNAi" id="347853"/>
<dbReference type="Pharos" id="O75333">
    <property type="development level" value="Tbio"/>
</dbReference>
<dbReference type="PRO" id="PR:O75333"/>
<dbReference type="Proteomes" id="UP000005640">
    <property type="component" value="Chromosome 11"/>
</dbReference>
<dbReference type="RNAct" id="O75333">
    <property type="molecule type" value="protein"/>
</dbReference>
<dbReference type="Bgee" id="ENSG00000167800">
    <property type="expression patterns" value="Expressed in primordial germ cell in gonad and 42 other cell types or tissues"/>
</dbReference>
<dbReference type="GO" id="GO:0000785">
    <property type="term" value="C:chromatin"/>
    <property type="evidence" value="ECO:0000247"/>
    <property type="project" value="NTNU_SB"/>
</dbReference>
<dbReference type="GO" id="GO:0005634">
    <property type="term" value="C:nucleus"/>
    <property type="evidence" value="ECO:0000318"/>
    <property type="project" value="GO_Central"/>
</dbReference>
<dbReference type="GO" id="GO:0000981">
    <property type="term" value="F:DNA-binding transcription factor activity, RNA polymerase II-specific"/>
    <property type="evidence" value="ECO:0000247"/>
    <property type="project" value="NTNU_SB"/>
</dbReference>
<dbReference type="GO" id="GO:0000978">
    <property type="term" value="F:RNA polymerase II cis-regulatory region sequence-specific DNA binding"/>
    <property type="evidence" value="ECO:0000318"/>
    <property type="project" value="GO_Central"/>
</dbReference>
<dbReference type="GO" id="GO:0009653">
    <property type="term" value="P:anatomical structure morphogenesis"/>
    <property type="evidence" value="ECO:0000304"/>
    <property type="project" value="ProtInc"/>
</dbReference>
<dbReference type="GO" id="GO:0001708">
    <property type="term" value="P:cell fate specification"/>
    <property type="evidence" value="ECO:0000318"/>
    <property type="project" value="GO_Central"/>
</dbReference>
<dbReference type="GO" id="GO:0045893">
    <property type="term" value="P:positive regulation of DNA-templated transcription"/>
    <property type="evidence" value="ECO:0007669"/>
    <property type="project" value="InterPro"/>
</dbReference>
<dbReference type="GO" id="GO:0006357">
    <property type="term" value="P:regulation of transcription by RNA polymerase II"/>
    <property type="evidence" value="ECO:0000318"/>
    <property type="project" value="GO_Central"/>
</dbReference>
<dbReference type="CDD" id="cd20187">
    <property type="entry name" value="T-box_TBX1_10-like"/>
    <property type="match status" value="1"/>
</dbReference>
<dbReference type="FunFam" id="2.60.40.820:FF:000006">
    <property type="entry name" value="T-box transcription factor"/>
    <property type="match status" value="1"/>
</dbReference>
<dbReference type="Gene3D" id="2.60.40.820">
    <property type="entry name" value="Transcription factor, T-box"/>
    <property type="match status" value="1"/>
</dbReference>
<dbReference type="InterPro" id="IPR008967">
    <property type="entry name" value="p53-like_TF_DNA-bd_sf"/>
</dbReference>
<dbReference type="InterPro" id="IPR046360">
    <property type="entry name" value="T-box_DNA-bd"/>
</dbReference>
<dbReference type="InterPro" id="IPR036960">
    <property type="entry name" value="T-box_sf"/>
</dbReference>
<dbReference type="InterPro" id="IPR001699">
    <property type="entry name" value="TF_T-box"/>
</dbReference>
<dbReference type="InterPro" id="IPR018186">
    <property type="entry name" value="TF_T-box_CS"/>
</dbReference>
<dbReference type="PANTHER" id="PTHR11267">
    <property type="entry name" value="T-BOX PROTEIN-RELATED"/>
    <property type="match status" value="1"/>
</dbReference>
<dbReference type="PANTHER" id="PTHR11267:SF102">
    <property type="entry name" value="T-BOX TRANSCRIPTION FACTOR TBX10"/>
    <property type="match status" value="1"/>
</dbReference>
<dbReference type="Pfam" id="PF00907">
    <property type="entry name" value="T-box"/>
    <property type="match status" value="1"/>
</dbReference>
<dbReference type="PRINTS" id="PR00937">
    <property type="entry name" value="TBOX"/>
</dbReference>
<dbReference type="SMART" id="SM00425">
    <property type="entry name" value="TBOX"/>
    <property type="match status" value="1"/>
</dbReference>
<dbReference type="SUPFAM" id="SSF49417">
    <property type="entry name" value="p53-like transcription factors"/>
    <property type="match status" value="1"/>
</dbReference>
<dbReference type="PROSITE" id="PS01283">
    <property type="entry name" value="TBOX_1"/>
    <property type="match status" value="1"/>
</dbReference>
<dbReference type="PROSITE" id="PS01264">
    <property type="entry name" value="TBOX_2"/>
    <property type="match status" value="1"/>
</dbReference>
<dbReference type="PROSITE" id="PS50252">
    <property type="entry name" value="TBOX_3"/>
    <property type="match status" value="1"/>
</dbReference>
<comment type="function">
    <text>Probable transcriptional regulator involved in developmental processes.</text>
</comment>
<comment type="subcellular location">
    <subcellularLocation>
        <location evidence="1">Nucleus</location>
    </subcellularLocation>
</comment>
<comment type="sequence caution" evidence="3">
    <conflict type="erroneous gene model prediction">
        <sequence resource="EMBL-CDS" id="AAC23481"/>
    </conflict>
</comment>
<keyword id="KW-0238">DNA-binding</keyword>
<keyword id="KW-0539">Nucleus</keyword>
<keyword id="KW-1185">Reference proteome</keyword>
<keyword id="KW-0804">Transcription</keyword>
<keyword id="KW-0805">Transcription regulation</keyword>
<feature type="chain" id="PRO_0000184441" description="T-box transcription factor TBX10">
    <location>
        <begin position="1"/>
        <end position="385"/>
    </location>
</feature>
<feature type="DNA-binding region" description="T-box" evidence="1">
    <location>
        <begin position="69"/>
        <end position="252"/>
    </location>
</feature>
<feature type="region of interest" description="Disordered" evidence="2">
    <location>
        <begin position="22"/>
        <end position="61"/>
    </location>
</feature>
<feature type="sequence variant" id="VAR_021984" description="In dbSNP:rs3758938.">
    <original>K</original>
    <variation>T</variation>
    <location>
        <position position="101"/>
    </location>
</feature>
<feature type="sequence variant" id="VAR_052262" description="In dbSNP:rs11227873.">
    <original>Q</original>
    <variation>H</variation>
    <location>
        <position position="160"/>
    </location>
</feature>
<feature type="sequence conflict" description="In Ref. 3; AAC23481." evidence="3" ref="3">
    <original>FV</original>
    <variation>LL</variation>
    <location>
        <begin position="200"/>
        <end position="201"/>
    </location>
</feature>
<feature type="sequence conflict" description="In Ref. 3; AAC23481." evidence="3" ref="3">
    <original>A</original>
    <variation>R</variation>
    <location>
        <position position="227"/>
    </location>
</feature>
<feature type="sequence conflict" description="In Ref. 3; AAC23481." evidence="3" ref="3">
    <original>D</original>
    <variation>ET</variation>
    <location>
        <position position="290"/>
    </location>
</feature>
<accession>O75333</accession>
<accession>Q14D64</accession>
<accession>Q86XS3</accession>
<name>TBX10_HUMAN</name>
<reference key="1">
    <citation type="journal article" date="2003" name="Gene Expr. Patterns">
        <title>The T-box gene Tbx10 exhibits a uniquely restricted expression pattern during mouse embryogenesis.</title>
        <authorList>
            <person name="Bush J.O."/>
            <person name="Maltby K.M."/>
            <person name="Cho E.-S."/>
            <person name="Jiang R."/>
        </authorList>
    </citation>
    <scope>NUCLEOTIDE SEQUENCE [MRNA]</scope>
</reference>
<reference key="2">
    <citation type="journal article" date="2004" name="Genome Res.">
        <title>The status, quality, and expansion of the NIH full-length cDNA project: the Mammalian Gene Collection (MGC).</title>
        <authorList>
            <consortium name="The MGC Project Team"/>
        </authorList>
    </citation>
    <scope>NUCLEOTIDE SEQUENCE [LARGE SCALE MRNA]</scope>
</reference>
<reference key="3">
    <citation type="journal article" date="1998" name="Mamm. Genome">
        <title>TBX10, a member of the Tbx1-subfamily of conserved developmental genes, is located at human chromosome 11q13 and proximal mouse chromosome 19.</title>
        <authorList>
            <person name="Law D.J."/>
            <person name="Garvey N."/>
            <person name="Agulnik S.I."/>
            <person name="Perlroth V."/>
            <person name="Hahn O.M."/>
            <person name="Rhinehart R.E."/>
            <person name="Gebuhr T.C."/>
            <person name="Silver L.M."/>
        </authorList>
    </citation>
    <scope>NUCLEOTIDE SEQUENCE [GENOMIC DNA] OF 126-335</scope>
    <source>
        <tissue>Lymph node</tissue>
    </source>
</reference>
<gene>
    <name type="primary">TBX10</name>
    <name type="synonym">TBX7</name>
</gene>
<organism>
    <name type="scientific">Homo sapiens</name>
    <name type="common">Human</name>
    <dbReference type="NCBI Taxonomy" id="9606"/>
    <lineage>
        <taxon>Eukaryota</taxon>
        <taxon>Metazoa</taxon>
        <taxon>Chordata</taxon>
        <taxon>Craniata</taxon>
        <taxon>Vertebrata</taxon>
        <taxon>Euteleostomi</taxon>
        <taxon>Mammalia</taxon>
        <taxon>Eutheria</taxon>
        <taxon>Euarchontoglires</taxon>
        <taxon>Primates</taxon>
        <taxon>Haplorrhini</taxon>
        <taxon>Catarrhini</taxon>
        <taxon>Hominidae</taxon>
        <taxon>Homo</taxon>
    </lineage>
</organism>
<proteinExistence type="evidence at transcript level"/>